<evidence type="ECO:0000305" key="1"/>
<gene>
    <name type="ordered locus">SA1737</name>
</gene>
<sequence>MTNGYIGSYTKKNGKGIYRFELNENQSRIDLLEIGFELEASTYLVRNNEVLYGINKEGEQCGVASLKIDDNGELHLLNKCLSSKAGTGCYVSISEDKRYLFEAVYGAGIIRMYELNTHTGEIIRLIQELAHDFPTGTHERQDHPHAHYINQTPDGKYVAVTDLGADRIVTYKFDDNGFEFYKESLFKDSDGTRHIEFHDNGKFAYVVHELSNTVSVAEYNDGKFEELERHLTIPENFDGDTKLAAVRLSHDQQFLYVSNRGHDSIAIFKVLDNGQHLELVTITESGGQFPRDFNIASSDDLLVCAHEQGDSVVTVFERSKETGKITLCDNTRVASEGVCVIF</sequence>
<proteinExistence type="evidence at protein level"/>
<organism>
    <name type="scientific">Staphylococcus aureus (strain N315)</name>
    <dbReference type="NCBI Taxonomy" id="158879"/>
    <lineage>
        <taxon>Bacteria</taxon>
        <taxon>Bacillati</taxon>
        <taxon>Bacillota</taxon>
        <taxon>Bacilli</taxon>
        <taxon>Bacillales</taxon>
        <taxon>Staphylococcaceae</taxon>
        <taxon>Staphylococcus</taxon>
    </lineage>
</organism>
<accession>Q7A4P4</accession>
<feature type="chain" id="PRO_0000298654" description="Uncharacterized protein SA1737">
    <location>
        <begin position="1"/>
        <end position="342"/>
    </location>
</feature>
<reference key="1">
    <citation type="journal article" date="2001" name="Lancet">
        <title>Whole genome sequencing of meticillin-resistant Staphylococcus aureus.</title>
        <authorList>
            <person name="Kuroda M."/>
            <person name="Ohta T."/>
            <person name="Uchiyama I."/>
            <person name="Baba T."/>
            <person name="Yuzawa H."/>
            <person name="Kobayashi I."/>
            <person name="Cui L."/>
            <person name="Oguchi A."/>
            <person name="Aoki K."/>
            <person name="Nagai Y."/>
            <person name="Lian J.-Q."/>
            <person name="Ito T."/>
            <person name="Kanamori M."/>
            <person name="Matsumaru H."/>
            <person name="Maruyama A."/>
            <person name="Murakami H."/>
            <person name="Hosoyama A."/>
            <person name="Mizutani-Ui Y."/>
            <person name="Takahashi N.K."/>
            <person name="Sawano T."/>
            <person name="Inoue R."/>
            <person name="Kaito C."/>
            <person name="Sekimizu K."/>
            <person name="Hirakawa H."/>
            <person name="Kuhara S."/>
            <person name="Goto S."/>
            <person name="Yabuzaki J."/>
            <person name="Kanehisa M."/>
            <person name="Yamashita A."/>
            <person name="Oshima K."/>
            <person name="Furuya K."/>
            <person name="Yoshino C."/>
            <person name="Shiba T."/>
            <person name="Hattori M."/>
            <person name="Ogasawara N."/>
            <person name="Hayashi H."/>
            <person name="Hiramatsu K."/>
        </authorList>
    </citation>
    <scope>NUCLEOTIDE SEQUENCE [LARGE SCALE GENOMIC DNA]</scope>
    <source>
        <strain>N315</strain>
    </source>
</reference>
<reference key="2">
    <citation type="submission" date="2007-10" db="UniProtKB">
        <title>Shotgun proteomic analysis of total and membrane protein extracts of S. aureus strain N315.</title>
        <authorList>
            <person name="Vaezzadeh A.R."/>
            <person name="Deshusses J."/>
            <person name="Lescuyer P."/>
            <person name="Hochstrasser D.F."/>
        </authorList>
    </citation>
    <scope>IDENTIFICATION BY MASS SPECTROMETRY [LARGE SCALE ANALYSIS]</scope>
    <source>
        <strain>N315</strain>
    </source>
</reference>
<dbReference type="EMBL" id="BA000018">
    <property type="protein sequence ID" value="BAB43007.1"/>
    <property type="molecule type" value="Genomic_DNA"/>
</dbReference>
<dbReference type="PIR" id="H89980">
    <property type="entry name" value="H89980"/>
</dbReference>
<dbReference type="RefSeq" id="WP_000181315.1">
    <property type="nucleotide sequence ID" value="NC_002745.2"/>
</dbReference>
<dbReference type="SMR" id="Q7A4P4"/>
<dbReference type="EnsemblBacteria" id="BAB43007">
    <property type="protein sequence ID" value="BAB43007"/>
    <property type="gene ID" value="BAB43007"/>
</dbReference>
<dbReference type="KEGG" id="sau:SA1737"/>
<dbReference type="HOGENOM" id="CLU_038716_3_0_9"/>
<dbReference type="GO" id="GO:0005829">
    <property type="term" value="C:cytosol"/>
    <property type="evidence" value="ECO:0007669"/>
    <property type="project" value="TreeGrafter"/>
</dbReference>
<dbReference type="GO" id="GO:0017057">
    <property type="term" value="F:6-phosphogluconolactonase activity"/>
    <property type="evidence" value="ECO:0007669"/>
    <property type="project" value="TreeGrafter"/>
</dbReference>
<dbReference type="FunFam" id="2.130.10.10:FF:000822">
    <property type="entry name" value="3-carboxy-cis,cis-muconate lactonizing enzyme"/>
    <property type="match status" value="1"/>
</dbReference>
<dbReference type="Gene3D" id="2.130.10.10">
    <property type="entry name" value="YVTN repeat-like/Quinoprotein amine dehydrogenase"/>
    <property type="match status" value="1"/>
</dbReference>
<dbReference type="InterPro" id="IPR050282">
    <property type="entry name" value="Cycloisomerase_2"/>
</dbReference>
<dbReference type="InterPro" id="IPR019405">
    <property type="entry name" value="Lactonase_7-beta_prop"/>
</dbReference>
<dbReference type="InterPro" id="IPR011045">
    <property type="entry name" value="N2O_reductase_N"/>
</dbReference>
<dbReference type="InterPro" id="IPR015943">
    <property type="entry name" value="WD40/YVTN_repeat-like_dom_sf"/>
</dbReference>
<dbReference type="PANTHER" id="PTHR30344:SF1">
    <property type="entry name" value="6-PHOSPHOGLUCONOLACTONASE"/>
    <property type="match status" value="1"/>
</dbReference>
<dbReference type="PANTHER" id="PTHR30344">
    <property type="entry name" value="6-PHOSPHOGLUCONOLACTONASE-RELATED"/>
    <property type="match status" value="1"/>
</dbReference>
<dbReference type="Pfam" id="PF10282">
    <property type="entry name" value="Lactonase"/>
    <property type="match status" value="1"/>
</dbReference>
<dbReference type="SUPFAM" id="SSF50974">
    <property type="entry name" value="Nitrous oxide reductase, N-terminal domain"/>
    <property type="match status" value="1"/>
</dbReference>
<comment type="similarity">
    <text evidence="1">Belongs to the cycloisomerase 2 family.</text>
</comment>
<name>Y1737_STAAN</name>
<protein>
    <recommendedName>
        <fullName>Uncharacterized protein SA1737</fullName>
    </recommendedName>
</protein>